<name>EAMB_ECOK1</name>
<sequence>MTPTLLSAFWTYTLITAMTPGPNNILALSSATSHGFRQSTRVLAGMSLGFLIVMLLCAGISFSLAVIDPAAVHLLSWAGAAYIVWLAWKIATSPTKEDGLQTKPISFWASFALQFVNVKIILYGVTALSTFVLPQTQALSWVVGVSVLLAMIGTFGNVCWALAGHLFQRLFRQYGRQLNIVLALLLVYCAVRIFY</sequence>
<feature type="chain" id="PRO_0000318723" description="Cysteine/O-acetylserine efflux protein">
    <location>
        <begin position="1"/>
        <end position="195"/>
    </location>
</feature>
<feature type="topological domain" description="Periplasmic" evidence="2">
    <location>
        <begin position="1"/>
        <end position="7"/>
    </location>
</feature>
<feature type="transmembrane region" description="Helical" evidence="2">
    <location>
        <begin position="8"/>
        <end position="28"/>
    </location>
</feature>
<feature type="topological domain" description="Cytoplasmic" evidence="2">
    <location>
        <begin position="29"/>
        <end position="46"/>
    </location>
</feature>
<feature type="transmembrane region" description="Helical" evidence="2">
    <location>
        <begin position="47"/>
        <end position="67"/>
    </location>
</feature>
<feature type="topological domain" description="Periplasmic" evidence="2">
    <location>
        <begin position="68"/>
        <end position="69"/>
    </location>
</feature>
<feature type="transmembrane region" description="Helical" evidence="2">
    <location>
        <begin position="70"/>
        <end position="90"/>
    </location>
</feature>
<feature type="topological domain" description="Cytoplasmic" evidence="2">
    <location>
        <begin position="91"/>
        <end position="104"/>
    </location>
</feature>
<feature type="transmembrane region" description="Helical" evidence="2">
    <location>
        <begin position="105"/>
        <end position="125"/>
    </location>
</feature>
<feature type="topological domain" description="Periplasmic" evidence="2">
    <location>
        <begin position="126"/>
        <end position="141"/>
    </location>
</feature>
<feature type="transmembrane region" description="Helical" evidence="2">
    <location>
        <begin position="142"/>
        <end position="162"/>
    </location>
</feature>
<feature type="topological domain" description="Cytoplasmic" evidence="2">
    <location>
        <begin position="163"/>
        <end position="176"/>
    </location>
</feature>
<feature type="transmembrane region" description="Helical" evidence="2">
    <location>
        <begin position="177"/>
        <end position="194"/>
    </location>
</feature>
<feature type="topological domain" description="Periplasmic" evidence="1">
    <location>
        <position position="195"/>
    </location>
</feature>
<accession>A1AEA8</accession>
<proteinExistence type="inferred from homology"/>
<organism>
    <name type="scientific">Escherichia coli O1:K1 / APEC</name>
    <dbReference type="NCBI Taxonomy" id="405955"/>
    <lineage>
        <taxon>Bacteria</taxon>
        <taxon>Pseudomonadati</taxon>
        <taxon>Pseudomonadota</taxon>
        <taxon>Gammaproteobacteria</taxon>
        <taxon>Enterobacterales</taxon>
        <taxon>Enterobacteriaceae</taxon>
        <taxon>Escherichia</taxon>
    </lineage>
</organism>
<keyword id="KW-0029">Amino-acid transport</keyword>
<keyword id="KW-0997">Cell inner membrane</keyword>
<keyword id="KW-1003">Cell membrane</keyword>
<keyword id="KW-0472">Membrane</keyword>
<keyword id="KW-1185">Reference proteome</keyword>
<keyword id="KW-0812">Transmembrane</keyword>
<keyword id="KW-1133">Transmembrane helix</keyword>
<keyword id="KW-0813">Transport</keyword>
<gene>
    <name type="primary">eamB</name>
    <name type="ordered locus">Ecok1_25040</name>
    <name type="ORF">APECO1_3954</name>
</gene>
<evidence type="ECO:0000250" key="1">
    <source>
        <dbReference type="UniProtKB" id="P38101"/>
    </source>
</evidence>
<evidence type="ECO:0000255" key="2"/>
<evidence type="ECO:0000305" key="3"/>
<protein>
    <recommendedName>
        <fullName evidence="1">Cysteine/O-acetylserine efflux protein</fullName>
    </recommendedName>
</protein>
<dbReference type="EMBL" id="CP000468">
    <property type="protein sequence ID" value="ABJ01998.1"/>
    <property type="molecule type" value="Genomic_DNA"/>
</dbReference>
<dbReference type="RefSeq" id="WP_000189209.1">
    <property type="nucleotide sequence ID" value="NZ_CADILS010000012.1"/>
</dbReference>
<dbReference type="KEGG" id="ecv:APECO1_3954"/>
<dbReference type="HOGENOM" id="CLU_079569_1_2_6"/>
<dbReference type="Proteomes" id="UP000008216">
    <property type="component" value="Chromosome"/>
</dbReference>
<dbReference type="GO" id="GO:0005886">
    <property type="term" value="C:plasma membrane"/>
    <property type="evidence" value="ECO:0007669"/>
    <property type="project" value="UniProtKB-SubCell"/>
</dbReference>
<dbReference type="GO" id="GO:0015171">
    <property type="term" value="F:amino acid transmembrane transporter activity"/>
    <property type="evidence" value="ECO:0007669"/>
    <property type="project" value="TreeGrafter"/>
</dbReference>
<dbReference type="GO" id="GO:0033228">
    <property type="term" value="P:cysteine export across plasma membrane"/>
    <property type="evidence" value="ECO:0007669"/>
    <property type="project" value="TreeGrafter"/>
</dbReference>
<dbReference type="InterPro" id="IPR001123">
    <property type="entry name" value="LeuE-type"/>
</dbReference>
<dbReference type="NCBIfam" id="NF007653">
    <property type="entry name" value="PRK10323.1"/>
    <property type="match status" value="1"/>
</dbReference>
<dbReference type="PANTHER" id="PTHR30086">
    <property type="entry name" value="ARGININE EXPORTER PROTEIN ARGO"/>
    <property type="match status" value="1"/>
</dbReference>
<dbReference type="PANTHER" id="PTHR30086:SF20">
    <property type="entry name" value="ARGININE EXPORTER PROTEIN ARGO-RELATED"/>
    <property type="match status" value="1"/>
</dbReference>
<dbReference type="Pfam" id="PF01810">
    <property type="entry name" value="LysE"/>
    <property type="match status" value="1"/>
</dbReference>
<comment type="function">
    <text evidence="1">Exporter of O-acetylserine (OAS) and cysteine.</text>
</comment>
<comment type="catalytic activity">
    <reaction evidence="1">
        <text>O-acetyl-L-serine(in) = O-acetyl-L-serine(out)</text>
        <dbReference type="Rhea" id="RHEA:29659"/>
        <dbReference type="ChEBI" id="CHEBI:58340"/>
    </reaction>
    <physiologicalReaction direction="left-to-right" evidence="1">
        <dbReference type="Rhea" id="RHEA:29660"/>
    </physiologicalReaction>
</comment>
<comment type="catalytic activity">
    <reaction evidence="1">
        <text>L-cysteine(in) = L-cysteine(out)</text>
        <dbReference type="Rhea" id="RHEA:29655"/>
        <dbReference type="ChEBI" id="CHEBI:35235"/>
    </reaction>
    <physiologicalReaction direction="left-to-right" evidence="1">
        <dbReference type="Rhea" id="RHEA:29656"/>
    </physiologicalReaction>
</comment>
<comment type="subcellular location">
    <subcellularLocation>
        <location evidence="1">Cell inner membrane</location>
        <topology evidence="2">Multi-pass membrane protein</topology>
    </subcellularLocation>
</comment>
<comment type="similarity">
    <text evidence="3">Belongs to the Rht family.</text>
</comment>
<reference key="1">
    <citation type="journal article" date="2007" name="J. Bacteriol.">
        <title>The genome sequence of avian pathogenic Escherichia coli strain O1:K1:H7 shares strong similarities with human extraintestinal pathogenic E. coli genomes.</title>
        <authorList>
            <person name="Johnson T.J."/>
            <person name="Kariyawasam S."/>
            <person name="Wannemuehler Y."/>
            <person name="Mangiamele P."/>
            <person name="Johnson S.J."/>
            <person name="Doetkott C."/>
            <person name="Skyberg J.A."/>
            <person name="Lynne A.M."/>
            <person name="Johnson J.R."/>
            <person name="Nolan L.K."/>
        </authorList>
    </citation>
    <scope>NUCLEOTIDE SEQUENCE [LARGE SCALE GENOMIC DNA]</scope>
</reference>